<keyword id="KW-0028">Amino-acid biosynthesis</keyword>
<keyword id="KW-0057">Aromatic amino acid biosynthesis</keyword>
<keyword id="KW-0456">Lyase</keyword>
<keyword id="KW-0822">Tryptophan biosynthesis</keyword>
<dbReference type="EC" id="4.2.1.20" evidence="1"/>
<dbReference type="EMBL" id="CP001407">
    <property type="protein sequence ID" value="ACO29697.1"/>
    <property type="molecule type" value="Genomic_DNA"/>
</dbReference>
<dbReference type="RefSeq" id="WP_000537935.1">
    <property type="nucleotide sequence ID" value="NZ_CP009318.1"/>
</dbReference>
<dbReference type="SMR" id="C1ELF1"/>
<dbReference type="KEGG" id="bcx:BCA_1283"/>
<dbReference type="PATRIC" id="fig|572264.18.peg.1234"/>
<dbReference type="UniPathway" id="UPA00035">
    <property type="reaction ID" value="UER00044"/>
</dbReference>
<dbReference type="Proteomes" id="UP000002210">
    <property type="component" value="Chromosome"/>
</dbReference>
<dbReference type="GO" id="GO:0005829">
    <property type="term" value="C:cytosol"/>
    <property type="evidence" value="ECO:0007669"/>
    <property type="project" value="TreeGrafter"/>
</dbReference>
<dbReference type="GO" id="GO:0004834">
    <property type="term" value="F:tryptophan synthase activity"/>
    <property type="evidence" value="ECO:0007669"/>
    <property type="project" value="UniProtKB-UniRule"/>
</dbReference>
<dbReference type="CDD" id="cd04724">
    <property type="entry name" value="Tryptophan_synthase_alpha"/>
    <property type="match status" value="1"/>
</dbReference>
<dbReference type="FunFam" id="3.20.20.70:FF:000037">
    <property type="entry name" value="Tryptophan synthase alpha chain"/>
    <property type="match status" value="1"/>
</dbReference>
<dbReference type="Gene3D" id="3.20.20.70">
    <property type="entry name" value="Aldolase class I"/>
    <property type="match status" value="1"/>
</dbReference>
<dbReference type="HAMAP" id="MF_00131">
    <property type="entry name" value="Trp_synth_alpha"/>
    <property type="match status" value="1"/>
</dbReference>
<dbReference type="InterPro" id="IPR013785">
    <property type="entry name" value="Aldolase_TIM"/>
</dbReference>
<dbReference type="InterPro" id="IPR011060">
    <property type="entry name" value="RibuloseP-bd_barrel"/>
</dbReference>
<dbReference type="InterPro" id="IPR018204">
    <property type="entry name" value="Trp_synthase_alpha_AS"/>
</dbReference>
<dbReference type="InterPro" id="IPR002028">
    <property type="entry name" value="Trp_synthase_suA"/>
</dbReference>
<dbReference type="NCBIfam" id="TIGR00262">
    <property type="entry name" value="trpA"/>
    <property type="match status" value="1"/>
</dbReference>
<dbReference type="PANTHER" id="PTHR43406:SF1">
    <property type="entry name" value="TRYPTOPHAN SYNTHASE ALPHA CHAIN, CHLOROPLASTIC"/>
    <property type="match status" value="1"/>
</dbReference>
<dbReference type="PANTHER" id="PTHR43406">
    <property type="entry name" value="TRYPTOPHAN SYNTHASE, ALPHA CHAIN"/>
    <property type="match status" value="1"/>
</dbReference>
<dbReference type="Pfam" id="PF00290">
    <property type="entry name" value="Trp_syntA"/>
    <property type="match status" value="1"/>
</dbReference>
<dbReference type="SUPFAM" id="SSF51366">
    <property type="entry name" value="Ribulose-phoshate binding barrel"/>
    <property type="match status" value="1"/>
</dbReference>
<dbReference type="PROSITE" id="PS00167">
    <property type="entry name" value="TRP_SYNTHASE_ALPHA"/>
    <property type="match status" value="1"/>
</dbReference>
<comment type="function">
    <text evidence="1">The alpha subunit is responsible for the aldol cleavage of indoleglycerol phosphate to indole and glyceraldehyde 3-phosphate.</text>
</comment>
<comment type="catalytic activity">
    <reaction evidence="1">
        <text>(1S,2R)-1-C-(indol-3-yl)glycerol 3-phosphate + L-serine = D-glyceraldehyde 3-phosphate + L-tryptophan + H2O</text>
        <dbReference type="Rhea" id="RHEA:10532"/>
        <dbReference type="ChEBI" id="CHEBI:15377"/>
        <dbReference type="ChEBI" id="CHEBI:33384"/>
        <dbReference type="ChEBI" id="CHEBI:57912"/>
        <dbReference type="ChEBI" id="CHEBI:58866"/>
        <dbReference type="ChEBI" id="CHEBI:59776"/>
        <dbReference type="EC" id="4.2.1.20"/>
    </reaction>
</comment>
<comment type="pathway">
    <text evidence="1">Amino-acid biosynthesis; L-tryptophan biosynthesis; L-tryptophan from chorismate: step 5/5.</text>
</comment>
<comment type="subunit">
    <text evidence="1">Tetramer of two alpha and two beta chains.</text>
</comment>
<comment type="similarity">
    <text evidence="1">Belongs to the TrpA family.</text>
</comment>
<reference key="1">
    <citation type="submission" date="2009-02" db="EMBL/GenBank/DDBJ databases">
        <title>Genome sequence of Bacillus cereus 03BB102.</title>
        <authorList>
            <person name="Dodson R.J."/>
            <person name="Jackson P."/>
            <person name="Munk A.C."/>
            <person name="Brettin T."/>
            <person name="Bruce D."/>
            <person name="Detter C."/>
            <person name="Tapia R."/>
            <person name="Han C."/>
            <person name="Sutton G."/>
            <person name="Sims D."/>
        </authorList>
    </citation>
    <scope>NUCLEOTIDE SEQUENCE [LARGE SCALE GENOMIC DNA]</scope>
    <source>
        <strain>03BB102</strain>
    </source>
</reference>
<sequence>MGVERIKAAFENGKKAFIPYVMGGDGGLEILKERIRFLDEAGASIVEIGIPFSDPVADGPTIQRAGKRALDSGVTVKGIFQALIEVRKEVQIPFVLMTYLNPVLAFGKERFIENCMEAGVDGIIVPDLPYEEQDIIAPLLREANIALIPLVTVTSPIERIKKIMSESEGFVYAVTVAGVTGVRQNFKDEIHSYLEKVKSHTHLPVVAGFGISTKEHVEEMVTICDGVVVGSKVIELLENEKREEICEFIQATKQKEEA</sequence>
<feature type="chain" id="PRO_1000198700" description="Tryptophan synthase alpha chain">
    <location>
        <begin position="1"/>
        <end position="258"/>
    </location>
</feature>
<feature type="active site" description="Proton acceptor" evidence="1">
    <location>
        <position position="47"/>
    </location>
</feature>
<feature type="active site" description="Proton acceptor" evidence="1">
    <location>
        <position position="58"/>
    </location>
</feature>
<protein>
    <recommendedName>
        <fullName evidence="1">Tryptophan synthase alpha chain</fullName>
        <ecNumber evidence="1">4.2.1.20</ecNumber>
    </recommendedName>
</protein>
<gene>
    <name evidence="1" type="primary">trpA</name>
    <name type="ordered locus">BCA_1283</name>
</gene>
<accession>C1ELF1</accession>
<evidence type="ECO:0000255" key="1">
    <source>
        <dbReference type="HAMAP-Rule" id="MF_00131"/>
    </source>
</evidence>
<name>TRPA_BACC3</name>
<proteinExistence type="inferred from homology"/>
<organism>
    <name type="scientific">Bacillus cereus (strain 03BB102)</name>
    <dbReference type="NCBI Taxonomy" id="572264"/>
    <lineage>
        <taxon>Bacteria</taxon>
        <taxon>Bacillati</taxon>
        <taxon>Bacillota</taxon>
        <taxon>Bacilli</taxon>
        <taxon>Bacillales</taxon>
        <taxon>Bacillaceae</taxon>
        <taxon>Bacillus</taxon>
        <taxon>Bacillus cereus group</taxon>
    </lineage>
</organism>